<gene>
    <name evidence="1" type="primary">trpB</name>
    <name type="ordered locus">MS1153</name>
</gene>
<reference key="1">
    <citation type="journal article" date="2004" name="Nat. Biotechnol.">
        <title>The genome sequence of the capnophilic rumen bacterium Mannheimia succiniciproducens.</title>
        <authorList>
            <person name="Hong S.H."/>
            <person name="Kim J.S."/>
            <person name="Lee S.Y."/>
            <person name="In Y.H."/>
            <person name="Choi S.S."/>
            <person name="Rih J.-K."/>
            <person name="Kim C.H."/>
            <person name="Jeong H."/>
            <person name="Hur C.G."/>
            <person name="Kim J.J."/>
        </authorList>
    </citation>
    <scope>NUCLEOTIDE SEQUENCE [LARGE SCALE GENOMIC DNA]</scope>
    <source>
        <strain>KCTC 0769BP / MBEL55E</strain>
    </source>
</reference>
<keyword id="KW-0028">Amino-acid biosynthesis</keyword>
<keyword id="KW-0057">Aromatic amino acid biosynthesis</keyword>
<keyword id="KW-0456">Lyase</keyword>
<keyword id="KW-0663">Pyridoxal phosphate</keyword>
<keyword id="KW-0822">Tryptophan biosynthesis</keyword>
<name>TRPB_MANSM</name>
<accession>Q65TF0</accession>
<comment type="function">
    <text evidence="1">The beta subunit is responsible for the synthesis of L-tryptophan from indole and L-serine.</text>
</comment>
<comment type="catalytic activity">
    <reaction evidence="1">
        <text>(1S,2R)-1-C-(indol-3-yl)glycerol 3-phosphate + L-serine = D-glyceraldehyde 3-phosphate + L-tryptophan + H2O</text>
        <dbReference type="Rhea" id="RHEA:10532"/>
        <dbReference type="ChEBI" id="CHEBI:15377"/>
        <dbReference type="ChEBI" id="CHEBI:33384"/>
        <dbReference type="ChEBI" id="CHEBI:57912"/>
        <dbReference type="ChEBI" id="CHEBI:58866"/>
        <dbReference type="ChEBI" id="CHEBI:59776"/>
        <dbReference type="EC" id="4.2.1.20"/>
    </reaction>
</comment>
<comment type="cofactor">
    <cofactor evidence="1">
        <name>pyridoxal 5'-phosphate</name>
        <dbReference type="ChEBI" id="CHEBI:597326"/>
    </cofactor>
</comment>
<comment type="pathway">
    <text evidence="1">Amino-acid biosynthesis; L-tryptophan biosynthesis; L-tryptophan from chorismate: step 5/5.</text>
</comment>
<comment type="subunit">
    <text evidence="1">Tetramer of two alpha and two beta chains.</text>
</comment>
<comment type="similarity">
    <text evidence="1">Belongs to the TrpB family.</text>
</comment>
<protein>
    <recommendedName>
        <fullName evidence="1">Tryptophan synthase beta chain</fullName>
        <ecNumber evidence="1">4.2.1.20</ecNumber>
    </recommendedName>
</protein>
<dbReference type="EC" id="4.2.1.20" evidence="1"/>
<dbReference type="EMBL" id="AE016827">
    <property type="protein sequence ID" value="AAU37760.1"/>
    <property type="molecule type" value="Genomic_DNA"/>
</dbReference>
<dbReference type="RefSeq" id="WP_011200327.1">
    <property type="nucleotide sequence ID" value="NC_006300.1"/>
</dbReference>
<dbReference type="SMR" id="Q65TF0"/>
<dbReference type="STRING" id="221988.MS1153"/>
<dbReference type="KEGG" id="msu:MS1153"/>
<dbReference type="eggNOG" id="COG0133">
    <property type="taxonomic scope" value="Bacteria"/>
</dbReference>
<dbReference type="HOGENOM" id="CLU_016734_3_1_6"/>
<dbReference type="OrthoDB" id="9766131at2"/>
<dbReference type="UniPathway" id="UPA00035">
    <property type="reaction ID" value="UER00044"/>
</dbReference>
<dbReference type="Proteomes" id="UP000000607">
    <property type="component" value="Chromosome"/>
</dbReference>
<dbReference type="GO" id="GO:0005737">
    <property type="term" value="C:cytoplasm"/>
    <property type="evidence" value="ECO:0007669"/>
    <property type="project" value="TreeGrafter"/>
</dbReference>
<dbReference type="GO" id="GO:0004834">
    <property type="term" value="F:tryptophan synthase activity"/>
    <property type="evidence" value="ECO:0007669"/>
    <property type="project" value="UniProtKB-UniRule"/>
</dbReference>
<dbReference type="CDD" id="cd06446">
    <property type="entry name" value="Trp-synth_B"/>
    <property type="match status" value="1"/>
</dbReference>
<dbReference type="FunFam" id="3.40.50.1100:FF:000001">
    <property type="entry name" value="Tryptophan synthase beta chain"/>
    <property type="match status" value="1"/>
</dbReference>
<dbReference type="FunFam" id="3.40.50.1100:FF:000004">
    <property type="entry name" value="Tryptophan synthase beta chain"/>
    <property type="match status" value="1"/>
</dbReference>
<dbReference type="Gene3D" id="3.40.50.1100">
    <property type="match status" value="2"/>
</dbReference>
<dbReference type="HAMAP" id="MF_00133">
    <property type="entry name" value="Trp_synth_beta"/>
    <property type="match status" value="1"/>
</dbReference>
<dbReference type="InterPro" id="IPR006653">
    <property type="entry name" value="Trp_synth_b_CS"/>
</dbReference>
<dbReference type="InterPro" id="IPR006654">
    <property type="entry name" value="Trp_synth_beta"/>
</dbReference>
<dbReference type="InterPro" id="IPR023026">
    <property type="entry name" value="Trp_synth_beta/beta-like"/>
</dbReference>
<dbReference type="InterPro" id="IPR001926">
    <property type="entry name" value="TrpB-like_PALP"/>
</dbReference>
<dbReference type="InterPro" id="IPR036052">
    <property type="entry name" value="TrpB-like_PALP_sf"/>
</dbReference>
<dbReference type="NCBIfam" id="TIGR00263">
    <property type="entry name" value="trpB"/>
    <property type="match status" value="1"/>
</dbReference>
<dbReference type="PANTHER" id="PTHR48077:SF3">
    <property type="entry name" value="TRYPTOPHAN SYNTHASE"/>
    <property type="match status" value="1"/>
</dbReference>
<dbReference type="PANTHER" id="PTHR48077">
    <property type="entry name" value="TRYPTOPHAN SYNTHASE-RELATED"/>
    <property type="match status" value="1"/>
</dbReference>
<dbReference type="Pfam" id="PF00291">
    <property type="entry name" value="PALP"/>
    <property type="match status" value="1"/>
</dbReference>
<dbReference type="PIRSF" id="PIRSF001413">
    <property type="entry name" value="Trp_syn_beta"/>
    <property type="match status" value="1"/>
</dbReference>
<dbReference type="SUPFAM" id="SSF53686">
    <property type="entry name" value="Tryptophan synthase beta subunit-like PLP-dependent enzymes"/>
    <property type="match status" value="1"/>
</dbReference>
<dbReference type="PROSITE" id="PS00168">
    <property type="entry name" value="TRP_SYNTHASE_BETA"/>
    <property type="match status" value="1"/>
</dbReference>
<organism>
    <name type="scientific">Mannheimia succiniciproducens (strain KCTC 0769BP / MBEL55E)</name>
    <dbReference type="NCBI Taxonomy" id="221988"/>
    <lineage>
        <taxon>Bacteria</taxon>
        <taxon>Pseudomonadati</taxon>
        <taxon>Pseudomonadota</taxon>
        <taxon>Gammaproteobacteria</taxon>
        <taxon>Pasteurellales</taxon>
        <taxon>Pasteurellaceae</taxon>
        <taxon>Basfia</taxon>
    </lineage>
</organism>
<proteinExistence type="inferred from homology"/>
<evidence type="ECO:0000255" key="1">
    <source>
        <dbReference type="HAMAP-Rule" id="MF_00133"/>
    </source>
</evidence>
<feature type="chain" id="PRO_1000076396" description="Tryptophan synthase beta chain">
    <location>
        <begin position="1"/>
        <end position="398"/>
    </location>
</feature>
<feature type="modified residue" description="N6-(pyridoxal phosphate)lysine" evidence="1">
    <location>
        <position position="88"/>
    </location>
</feature>
<sequence length="398" mass="43470">MTDTILDPYFGEFGGMYVPEILIPVLKQLEKAFVEAQQDPAFQTEFLDLLKNYAGRPTALTLCRNLTKGTKTKLYLKREDLLHGGAHKTNQVLGQILLAKRMGKTRIIAETGAGQHGVATALACAMLGMPCRIYMGAKDVERQSPNVFRMRLMGAEVFPVTKGSSTLKDACCEAMRDWAANYENTHYLIGTAAGPHPFPTIVREFQKMIGEETKAQILQREGRLPDAVIACVGGGSNAIGMFTDFINETSVRLIGVEPAGKGIETGEHGAPLGHGKPGIYFGMKSPIMQTEDGQIEESYSISAGLDFPSVGPQHAYLNSIGRAEYPSITDDEALEAFKELAQHEGIIPALESSHALAYALKMARQNPMREQLLVVNLSGRGDKDIFTVDKIFSERGML</sequence>